<feature type="signal peptide" evidence="4">
    <location>
        <begin position="1"/>
        <end position="32"/>
    </location>
</feature>
<feature type="chain" id="PRO_0000026524" description="Vacuolar-processing enzyme">
    <location>
        <begin position="33"/>
        <end position="495"/>
    </location>
</feature>
<feature type="active site" evidence="1">
    <location>
        <position position="178"/>
    </location>
</feature>
<feature type="active site" description="Nucleophile" evidence="1">
    <location>
        <position position="220"/>
    </location>
</feature>
<feature type="site" description="Required for post-translational maturation and enzyme activity" evidence="3">
    <location>
        <position position="267"/>
    </location>
</feature>
<feature type="glycosylation site" description="N-linked (GlcNAc...) asparagine" evidence="5">
    <location>
        <position position="138"/>
    </location>
</feature>
<feature type="glycosylation site" description="N-linked (GlcNAc...) asparagine" evidence="5">
    <location>
        <position position="320"/>
    </location>
</feature>
<feature type="glycosylation site" description="N-linked (GlcNAc...) asparagine" evidence="5">
    <location>
        <position position="376"/>
    </location>
</feature>
<feature type="disulfide bond" evidence="2">
    <location>
        <begin position="253"/>
        <end position="267"/>
    </location>
</feature>
<feature type="disulfide bond" evidence="2">
    <location>
        <begin position="431"/>
        <end position="461"/>
    </location>
</feature>
<feature type="disulfide bond" evidence="2">
    <location>
        <begin position="443"/>
        <end position="478"/>
    </location>
</feature>
<dbReference type="EC" id="3.4.22.-"/>
<dbReference type="EMBL" id="D28876">
    <property type="protein sequence ID" value="BAA06030.1"/>
    <property type="molecule type" value="mRNA"/>
</dbReference>
<dbReference type="PIR" id="T07132">
    <property type="entry name" value="T07132"/>
</dbReference>
<dbReference type="RefSeq" id="NP_001236678.1">
    <property type="nucleotide sequence ID" value="NM_001249749.1"/>
</dbReference>
<dbReference type="SMR" id="P49045"/>
<dbReference type="FunCoup" id="P49045">
    <property type="interactions" value="627"/>
</dbReference>
<dbReference type="STRING" id="3847.P49045"/>
<dbReference type="MEROPS" id="C13.001"/>
<dbReference type="PaxDb" id="3847-GLYMA17G14680.1"/>
<dbReference type="GeneID" id="547964"/>
<dbReference type="KEGG" id="gmx:547964"/>
<dbReference type="eggNOG" id="KOG1348">
    <property type="taxonomic scope" value="Eukaryota"/>
</dbReference>
<dbReference type="InParanoid" id="P49045"/>
<dbReference type="OrthoDB" id="192611at2759"/>
<dbReference type="Proteomes" id="UP000008827">
    <property type="component" value="Unplaced"/>
</dbReference>
<dbReference type="GO" id="GO:0005773">
    <property type="term" value="C:vacuole"/>
    <property type="evidence" value="ECO:0007669"/>
    <property type="project" value="GOC"/>
</dbReference>
<dbReference type="GO" id="GO:0004197">
    <property type="term" value="F:cysteine-type endopeptidase activity"/>
    <property type="evidence" value="ECO:0000318"/>
    <property type="project" value="GO_Central"/>
</dbReference>
<dbReference type="GO" id="GO:0051603">
    <property type="term" value="P:proteolysis involved in protein catabolic process"/>
    <property type="evidence" value="ECO:0000318"/>
    <property type="project" value="GO_Central"/>
</dbReference>
<dbReference type="GO" id="GO:0006624">
    <property type="term" value="P:vacuolar protein processing"/>
    <property type="evidence" value="ECO:0000318"/>
    <property type="project" value="GO_Central"/>
</dbReference>
<dbReference type="CDD" id="cd21115">
    <property type="entry name" value="legumain_C"/>
    <property type="match status" value="1"/>
</dbReference>
<dbReference type="FunFam" id="1.10.132.130:FF:000001">
    <property type="entry name" value="Vacuolar-processing enzyme beta-isozyme"/>
    <property type="match status" value="1"/>
</dbReference>
<dbReference type="FunFam" id="3.40.50.1460:FF:000005">
    <property type="entry name" value="Vacuolar-processing enzyme beta-isozyme"/>
    <property type="match status" value="1"/>
</dbReference>
<dbReference type="Gene3D" id="1.10.132.130">
    <property type="match status" value="1"/>
</dbReference>
<dbReference type="Gene3D" id="3.40.50.1460">
    <property type="match status" value="1"/>
</dbReference>
<dbReference type="InterPro" id="IPR043577">
    <property type="entry name" value="AE"/>
</dbReference>
<dbReference type="InterPro" id="IPR048501">
    <property type="entry name" value="Legum_prodom"/>
</dbReference>
<dbReference type="InterPro" id="IPR046427">
    <property type="entry name" value="Legumain_prodom_sf"/>
</dbReference>
<dbReference type="InterPro" id="IPR001096">
    <property type="entry name" value="Peptidase_C13"/>
</dbReference>
<dbReference type="PANTHER" id="PTHR12000">
    <property type="entry name" value="HEMOGLOBINASE FAMILY MEMBER"/>
    <property type="match status" value="1"/>
</dbReference>
<dbReference type="PANTHER" id="PTHR12000:SF42">
    <property type="entry name" value="LEGUMAIN"/>
    <property type="match status" value="1"/>
</dbReference>
<dbReference type="Pfam" id="PF20985">
    <property type="entry name" value="Legum_prodom"/>
    <property type="match status" value="1"/>
</dbReference>
<dbReference type="Pfam" id="PF01650">
    <property type="entry name" value="Peptidase_C13"/>
    <property type="match status" value="1"/>
</dbReference>
<dbReference type="PIRSF" id="PIRSF500139">
    <property type="entry name" value="AE"/>
    <property type="match status" value="1"/>
</dbReference>
<dbReference type="PIRSF" id="PIRSF019663">
    <property type="entry name" value="Legumain"/>
    <property type="match status" value="1"/>
</dbReference>
<dbReference type="PRINTS" id="PR00776">
    <property type="entry name" value="HEMOGLOBNASE"/>
</dbReference>
<keyword id="KW-1015">Disulfide bond</keyword>
<keyword id="KW-0325">Glycoprotein</keyword>
<keyword id="KW-0378">Hydrolase</keyword>
<keyword id="KW-0645">Protease</keyword>
<keyword id="KW-1185">Reference proteome</keyword>
<keyword id="KW-0732">Signal</keyword>
<keyword id="KW-0788">Thiol protease</keyword>
<evidence type="ECO:0000250" key="1">
    <source>
        <dbReference type="UniProtKB" id="O89017"/>
    </source>
</evidence>
<evidence type="ECO:0000250" key="2">
    <source>
        <dbReference type="UniProtKB" id="P49046"/>
    </source>
</evidence>
<evidence type="ECO:0000250" key="3">
    <source>
        <dbReference type="UniProtKB" id="Q84LM2"/>
    </source>
</evidence>
<evidence type="ECO:0000255" key="4"/>
<evidence type="ECO:0000255" key="5">
    <source>
        <dbReference type="PROSITE-ProRule" id="PRU00498"/>
    </source>
</evidence>
<evidence type="ECO:0000305" key="6"/>
<organism>
    <name type="scientific">Glycine max</name>
    <name type="common">Soybean</name>
    <name type="synonym">Glycine hispida</name>
    <dbReference type="NCBI Taxonomy" id="3847"/>
    <lineage>
        <taxon>Eukaryota</taxon>
        <taxon>Viridiplantae</taxon>
        <taxon>Streptophyta</taxon>
        <taxon>Embryophyta</taxon>
        <taxon>Tracheophyta</taxon>
        <taxon>Spermatophyta</taxon>
        <taxon>Magnoliopsida</taxon>
        <taxon>eudicotyledons</taxon>
        <taxon>Gunneridae</taxon>
        <taxon>Pentapetalae</taxon>
        <taxon>rosids</taxon>
        <taxon>fabids</taxon>
        <taxon>Fabales</taxon>
        <taxon>Fabaceae</taxon>
        <taxon>Papilionoideae</taxon>
        <taxon>50 kb inversion clade</taxon>
        <taxon>NPAAA clade</taxon>
        <taxon>indigoferoid/millettioid clade</taxon>
        <taxon>Phaseoleae</taxon>
        <taxon>Glycine</taxon>
        <taxon>Glycine subgen. Soja</taxon>
    </lineage>
</organism>
<accession>P49045</accession>
<protein>
    <recommendedName>
        <fullName>Vacuolar-processing enzyme</fullName>
        <shortName>VPE</shortName>
        <ecNumber>3.4.22.-</ecNumber>
    </recommendedName>
</protein>
<sequence length="495" mass="55164">MALDRSIISKTTWYSVVLWMMVVLVRVHGAAARPNRKEWDSVIKLPTEPVDADSDEVGTRWAVLVAGSNGYGNYRHQADVCHAYQLLIKGGLKEENIVVFMYDDIATNELNPRHGVIINHPEGEDLYAGVPKDYTGDNVTTENLFAVILGDKSKLKGGSGKVINSKPEDRIFIYYSDHGGPGILGMPNMPYLYAMDFIDVLKKKHASGSYKEMVIYVEACESGSVFEGIMPKDLNIYVTTASNAQENSWGTYCPGMDPSPPPEYITCLGDLYSVAWMEDSEAHNLKRESVKQQYKSVKQRTSNFNNYAMGSHVMQYGDTNITAEKLYLYQGFDPATVNFPPQNGRLETKMEVVNQRDAELFLLWQMYQRSNHQSENKTDILKQIAETVKHRKHIDGSVELIGVLLYGPGKGSSVLQSVRAPGSSLVDDWTCLKSMVRVFETHCGTLTQYGMKHMRAFANICNSGVSEASMEEACLAACEGYNAGLFHPSNRGYSA</sequence>
<proteinExistence type="evidence at transcript level"/>
<name>VPE_SOYBN</name>
<comment type="function">
    <text>Asparagine-specific endopeptidase involved in the processing of vacuolar seed protein precursors into the mature forms.</text>
</comment>
<comment type="similarity">
    <text evidence="6">Belongs to the peptidase C13 family.</text>
</comment>
<reference key="1">
    <citation type="journal article" date="1994" name="Plant Cell Physiol.">
        <title>Vacuolar processing enzyme of soybean that converts proproteins to the corresponding mature forms.</title>
        <authorList>
            <person name="Shimada T."/>
            <person name="Hiraiwa N."/>
            <person name="Nishimura M."/>
            <person name="Hara-Nishimura I."/>
        </authorList>
    </citation>
    <scope>NUCLEOTIDE SEQUENCE [MRNA]</scope>
    <source>
        <tissue>Seed cotyledon</tissue>
    </source>
</reference>